<keyword id="KW-0025">Alternative splicing</keyword>
<keyword id="KW-0378">Hydrolase</keyword>
<keyword id="KW-0472">Membrane</keyword>
<keyword id="KW-0645">Protease</keyword>
<keyword id="KW-1267">Proteomics identification</keyword>
<keyword id="KW-1185">Reference proteome</keyword>
<keyword id="KW-0677">Repeat</keyword>
<keyword id="KW-0720">Serine protease</keyword>
<keyword id="KW-0812">Transmembrane</keyword>
<keyword id="KW-1133">Transmembrane helix</keyword>
<comment type="function">
    <text evidence="1">May be involved in regulated intramembrane proteolysis and the subsequent release of functional polypeptides from their membrane anchors.</text>
</comment>
<comment type="catalytic activity">
    <reaction>
        <text>Cleaves type-1 transmembrane domains using a catalytic dyad composed of serine and histidine that are contributed by different transmembrane domains.</text>
        <dbReference type="EC" id="3.4.21.105"/>
    </reaction>
</comment>
<comment type="subcellular location">
    <subcellularLocation>
        <location evidence="6">Membrane</location>
        <topology evidence="6">Multi-pass membrane protein</topology>
    </subcellularLocation>
</comment>
<comment type="alternative products">
    <event type="alternative splicing"/>
    <isoform>
        <id>P58872-1</id>
        <name>1</name>
        <sequence type="displayed"/>
    </isoform>
    <isoform>
        <id>P58872-2</id>
        <name>2</name>
        <sequence type="described" ref="VSP_056259"/>
    </isoform>
    <isoform>
        <id>P58872-3</id>
        <name>3</name>
        <sequence type="described" ref="VSP_056260"/>
    </isoform>
</comment>
<comment type="similarity">
    <text evidence="6">Belongs to the peptidase S54 family.</text>
</comment>
<gene>
    <name type="primary">RHBDL3</name>
    <name type="synonym">RHBDL4</name>
    <name type="synonym">VRHO</name>
</gene>
<name>RHBL3_HUMAN</name>
<accession>P58872</accession>
<accession>A6NMH1</accession>
<accession>Q495Y4</accession>
<accession>Q495Y5</accession>
<accession>Q495Y6</accession>
<feature type="chain" id="PRO_0000206177" description="Rhomboid-related protein 3">
    <location>
        <begin position="1"/>
        <end position="404"/>
    </location>
</feature>
<feature type="transmembrane region" description="Helical" evidence="2">
    <location>
        <begin position="164"/>
        <end position="184"/>
    </location>
</feature>
<feature type="transmembrane region" description="Helical" evidence="2">
    <location>
        <begin position="218"/>
        <end position="238"/>
    </location>
</feature>
<feature type="transmembrane region" description="Helical" evidence="2">
    <location>
        <begin position="250"/>
        <end position="270"/>
    </location>
</feature>
<feature type="transmembrane region" description="Helical" evidence="2">
    <location>
        <begin position="274"/>
        <end position="294"/>
    </location>
</feature>
<feature type="transmembrane region" description="Helical" evidence="2">
    <location>
        <begin position="303"/>
        <end position="325"/>
    </location>
</feature>
<feature type="transmembrane region" description="Helical" evidence="2">
    <location>
        <begin position="338"/>
        <end position="358"/>
    </location>
</feature>
<feature type="transmembrane region" description="Helical" evidence="2">
    <location>
        <begin position="371"/>
        <end position="391"/>
    </location>
</feature>
<feature type="domain" description="EF-hand 1" evidence="3">
    <location>
        <begin position="34"/>
        <end position="69"/>
    </location>
</feature>
<feature type="domain" description="EF-hand 2" evidence="3">
    <location>
        <begin position="70"/>
        <end position="105"/>
    </location>
</feature>
<feature type="active site" description="Nucleophile" evidence="1">
    <location>
        <position position="278"/>
    </location>
</feature>
<feature type="active site" evidence="1">
    <location>
        <position position="343"/>
    </location>
</feature>
<feature type="splice variant" id="VSP_056259" description="In isoform 2." evidence="4 5">
    <location>
        <begin position="1"/>
        <end position="98"/>
    </location>
</feature>
<feature type="splice variant" id="VSP_056260" description="In isoform 3." evidence="5">
    <location>
        <begin position="38"/>
        <end position="45"/>
    </location>
</feature>
<feature type="sequence variant" id="VAR_024593" description="In dbSNP:rs4795690.">
    <original>V</original>
    <variation>M</variation>
    <location>
        <position position="255"/>
    </location>
</feature>
<sequence>MGEHPSPGPAVAACAEAERIEELEPEAEERLPAAPEDHWKVLFDQFDPGNTGYISTGKFRSLLESHSSKLDPHKREVLLALADSHADGQIGYQDFVSLMSNKRSNSFRQAILQGNRRLSSKALLEEKGLSLSQRLIRHVAYETLPREIDRKWYYDSYTCCPPPWFMITVTLLEVAFFLYNGVSLGQFVLQVTHPRYLKNSLVYHPQLRAQVWRYLTYIFMHAGIEHLGLNVVLQLLVGVPLEMVHGATRIGLVYVAGVVAGSLAVSVADMTAPVVGSSGGVYALVSAHLANIVMNWSGMKCQFKLLRMAVALICMSMEFGRAVWLRFHPSAYPPCPHPSFVAHLGGVAVGITLGVVVLRNYEQRLQDQSLWWIFVAMYTVFVLFAVFWNIFAYTLLDLKLPPPP</sequence>
<protein>
    <recommendedName>
        <fullName>Rhomboid-related protein 3</fullName>
        <ecNumber>3.4.21.105</ecNumber>
    </recommendedName>
    <alternativeName>
        <fullName>Ventrhoid transmembrane protein</fullName>
    </alternativeName>
</protein>
<organism>
    <name type="scientific">Homo sapiens</name>
    <name type="common">Human</name>
    <dbReference type="NCBI Taxonomy" id="9606"/>
    <lineage>
        <taxon>Eukaryota</taxon>
        <taxon>Metazoa</taxon>
        <taxon>Chordata</taxon>
        <taxon>Craniata</taxon>
        <taxon>Vertebrata</taxon>
        <taxon>Euteleostomi</taxon>
        <taxon>Mammalia</taxon>
        <taxon>Eutheria</taxon>
        <taxon>Euarchontoglires</taxon>
        <taxon>Primates</taxon>
        <taxon>Haplorrhini</taxon>
        <taxon>Catarrhini</taxon>
        <taxon>Hominidae</taxon>
        <taxon>Homo</taxon>
    </lineage>
</organism>
<evidence type="ECO:0000250" key="1"/>
<evidence type="ECO:0000255" key="2"/>
<evidence type="ECO:0000255" key="3">
    <source>
        <dbReference type="PROSITE-ProRule" id="PRU00448"/>
    </source>
</evidence>
<evidence type="ECO:0000303" key="4">
    <source>
    </source>
</evidence>
<evidence type="ECO:0000303" key="5">
    <source>
    </source>
</evidence>
<evidence type="ECO:0000305" key="6"/>
<reference key="1">
    <citation type="journal article" date="2002" name="Mech. Dev.">
        <title>Cloning and expression of Ventrhoid, a novel vertebrate homologue of the Drosophila EGF pathway gene Rhomboid.</title>
        <authorList>
            <person name="Jaszai J."/>
            <person name="Brand M."/>
        </authorList>
    </citation>
    <scope>NUCLEOTIDE SEQUENCE [MRNA] (ISOFORM 1)</scope>
    <source>
        <tissue>Fetal brain</tissue>
    </source>
</reference>
<reference key="2">
    <citation type="journal article" date="2004" name="Nat. Genet.">
        <title>Complete sequencing and characterization of 21,243 full-length human cDNAs.</title>
        <authorList>
            <person name="Ota T."/>
            <person name="Suzuki Y."/>
            <person name="Nishikawa T."/>
            <person name="Otsuki T."/>
            <person name="Sugiyama T."/>
            <person name="Irie R."/>
            <person name="Wakamatsu A."/>
            <person name="Hayashi K."/>
            <person name="Sato H."/>
            <person name="Nagai K."/>
            <person name="Kimura K."/>
            <person name="Makita H."/>
            <person name="Sekine M."/>
            <person name="Obayashi M."/>
            <person name="Nishi T."/>
            <person name="Shibahara T."/>
            <person name="Tanaka T."/>
            <person name="Ishii S."/>
            <person name="Yamamoto J."/>
            <person name="Saito K."/>
            <person name="Kawai Y."/>
            <person name="Isono Y."/>
            <person name="Nakamura Y."/>
            <person name="Nagahari K."/>
            <person name="Murakami K."/>
            <person name="Yasuda T."/>
            <person name="Iwayanagi T."/>
            <person name="Wagatsuma M."/>
            <person name="Shiratori A."/>
            <person name="Sudo H."/>
            <person name="Hosoiri T."/>
            <person name="Kaku Y."/>
            <person name="Kodaira H."/>
            <person name="Kondo H."/>
            <person name="Sugawara M."/>
            <person name="Takahashi M."/>
            <person name="Kanda K."/>
            <person name="Yokoi T."/>
            <person name="Furuya T."/>
            <person name="Kikkawa E."/>
            <person name="Omura Y."/>
            <person name="Abe K."/>
            <person name="Kamihara K."/>
            <person name="Katsuta N."/>
            <person name="Sato K."/>
            <person name="Tanikawa M."/>
            <person name="Yamazaki M."/>
            <person name="Ninomiya K."/>
            <person name="Ishibashi T."/>
            <person name="Yamashita H."/>
            <person name="Murakawa K."/>
            <person name="Fujimori K."/>
            <person name="Tanai H."/>
            <person name="Kimata M."/>
            <person name="Watanabe M."/>
            <person name="Hiraoka S."/>
            <person name="Chiba Y."/>
            <person name="Ishida S."/>
            <person name="Ono Y."/>
            <person name="Takiguchi S."/>
            <person name="Watanabe S."/>
            <person name="Yosida M."/>
            <person name="Hotuta T."/>
            <person name="Kusano J."/>
            <person name="Kanehori K."/>
            <person name="Takahashi-Fujii A."/>
            <person name="Hara H."/>
            <person name="Tanase T.-O."/>
            <person name="Nomura Y."/>
            <person name="Togiya S."/>
            <person name="Komai F."/>
            <person name="Hara R."/>
            <person name="Takeuchi K."/>
            <person name="Arita M."/>
            <person name="Imose N."/>
            <person name="Musashino K."/>
            <person name="Yuuki H."/>
            <person name="Oshima A."/>
            <person name="Sasaki N."/>
            <person name="Aotsuka S."/>
            <person name="Yoshikawa Y."/>
            <person name="Matsunawa H."/>
            <person name="Ichihara T."/>
            <person name="Shiohata N."/>
            <person name="Sano S."/>
            <person name="Moriya S."/>
            <person name="Momiyama H."/>
            <person name="Satoh N."/>
            <person name="Takami S."/>
            <person name="Terashima Y."/>
            <person name="Suzuki O."/>
            <person name="Nakagawa S."/>
            <person name="Senoh A."/>
            <person name="Mizoguchi H."/>
            <person name="Goto Y."/>
            <person name="Shimizu F."/>
            <person name="Wakebe H."/>
            <person name="Hishigaki H."/>
            <person name="Watanabe T."/>
            <person name="Sugiyama A."/>
            <person name="Takemoto M."/>
            <person name="Kawakami B."/>
            <person name="Yamazaki M."/>
            <person name="Watanabe K."/>
            <person name="Kumagai A."/>
            <person name="Itakura S."/>
            <person name="Fukuzumi Y."/>
            <person name="Fujimori Y."/>
            <person name="Komiyama M."/>
            <person name="Tashiro H."/>
            <person name="Tanigami A."/>
            <person name="Fujiwara T."/>
            <person name="Ono T."/>
            <person name="Yamada K."/>
            <person name="Fujii Y."/>
            <person name="Ozaki K."/>
            <person name="Hirao M."/>
            <person name="Ohmori Y."/>
            <person name="Kawabata A."/>
            <person name="Hikiji T."/>
            <person name="Kobatake N."/>
            <person name="Inagaki H."/>
            <person name="Ikema Y."/>
            <person name="Okamoto S."/>
            <person name="Okitani R."/>
            <person name="Kawakami T."/>
            <person name="Noguchi S."/>
            <person name="Itoh T."/>
            <person name="Shigeta K."/>
            <person name="Senba T."/>
            <person name="Matsumura K."/>
            <person name="Nakajima Y."/>
            <person name="Mizuno T."/>
            <person name="Morinaga M."/>
            <person name="Sasaki M."/>
            <person name="Togashi T."/>
            <person name="Oyama M."/>
            <person name="Hata H."/>
            <person name="Watanabe M."/>
            <person name="Komatsu T."/>
            <person name="Mizushima-Sugano J."/>
            <person name="Satoh T."/>
            <person name="Shirai Y."/>
            <person name="Takahashi Y."/>
            <person name="Nakagawa K."/>
            <person name="Okumura K."/>
            <person name="Nagase T."/>
            <person name="Nomura N."/>
            <person name="Kikuchi H."/>
            <person name="Masuho Y."/>
            <person name="Yamashita R."/>
            <person name="Nakai K."/>
            <person name="Yada T."/>
            <person name="Nakamura Y."/>
            <person name="Ohara O."/>
            <person name="Isogai T."/>
            <person name="Sugano S."/>
        </authorList>
    </citation>
    <scope>NUCLEOTIDE SEQUENCE [LARGE SCALE MRNA] (ISOFORM 2)</scope>
    <source>
        <tissue>Cerebellum</tissue>
    </source>
</reference>
<reference key="3">
    <citation type="journal article" date="2006" name="Nature">
        <title>DNA sequence of human chromosome 17 and analysis of rearrangement in the human lineage.</title>
        <authorList>
            <person name="Zody M.C."/>
            <person name="Garber M."/>
            <person name="Adams D.J."/>
            <person name="Sharpe T."/>
            <person name="Harrow J."/>
            <person name="Lupski J.R."/>
            <person name="Nicholson C."/>
            <person name="Searle S.M."/>
            <person name="Wilming L."/>
            <person name="Young S.K."/>
            <person name="Abouelleil A."/>
            <person name="Allen N.R."/>
            <person name="Bi W."/>
            <person name="Bloom T."/>
            <person name="Borowsky M.L."/>
            <person name="Bugalter B.E."/>
            <person name="Butler J."/>
            <person name="Chang J.L."/>
            <person name="Chen C.-K."/>
            <person name="Cook A."/>
            <person name="Corum B."/>
            <person name="Cuomo C.A."/>
            <person name="de Jong P.J."/>
            <person name="DeCaprio D."/>
            <person name="Dewar K."/>
            <person name="FitzGerald M."/>
            <person name="Gilbert J."/>
            <person name="Gibson R."/>
            <person name="Gnerre S."/>
            <person name="Goldstein S."/>
            <person name="Grafham D.V."/>
            <person name="Grocock R."/>
            <person name="Hafez N."/>
            <person name="Hagopian D.S."/>
            <person name="Hart E."/>
            <person name="Norman C.H."/>
            <person name="Humphray S."/>
            <person name="Jaffe D.B."/>
            <person name="Jones M."/>
            <person name="Kamal M."/>
            <person name="Khodiyar V.K."/>
            <person name="LaButti K."/>
            <person name="Laird G."/>
            <person name="Lehoczky J."/>
            <person name="Liu X."/>
            <person name="Lokyitsang T."/>
            <person name="Loveland J."/>
            <person name="Lui A."/>
            <person name="Macdonald P."/>
            <person name="Major J.E."/>
            <person name="Matthews L."/>
            <person name="Mauceli E."/>
            <person name="McCarroll S.A."/>
            <person name="Mihalev A.H."/>
            <person name="Mudge J."/>
            <person name="Nguyen C."/>
            <person name="Nicol R."/>
            <person name="O'Leary S.B."/>
            <person name="Osoegawa K."/>
            <person name="Schwartz D.C."/>
            <person name="Shaw-Smith C."/>
            <person name="Stankiewicz P."/>
            <person name="Steward C."/>
            <person name="Swarbreck D."/>
            <person name="Venkataraman V."/>
            <person name="Whittaker C.A."/>
            <person name="Yang X."/>
            <person name="Zimmer A.R."/>
            <person name="Bradley A."/>
            <person name="Hubbard T."/>
            <person name="Birren B.W."/>
            <person name="Rogers J."/>
            <person name="Lander E.S."/>
            <person name="Nusbaum C."/>
        </authorList>
    </citation>
    <scope>NUCLEOTIDE SEQUENCE [LARGE SCALE GENOMIC DNA]</scope>
</reference>
<reference key="4">
    <citation type="journal article" date="2004" name="Genome Res.">
        <title>The status, quality, and expansion of the NIH full-length cDNA project: the Mammalian Gene Collection (MGC).</title>
        <authorList>
            <consortium name="The MGC Project Team"/>
        </authorList>
    </citation>
    <scope>NUCLEOTIDE SEQUENCE [LARGE SCALE MRNA] (ISOFORMS 1; 2 AND 3)</scope>
</reference>
<dbReference type="EC" id="3.4.21.105"/>
<dbReference type="EMBL" id="AJ313480">
    <property type="protein sequence ID" value="CAC86145.1"/>
    <property type="molecule type" value="mRNA"/>
</dbReference>
<dbReference type="EMBL" id="AK124570">
    <property type="protein sequence ID" value="BAG54052.1"/>
    <property type="molecule type" value="mRNA"/>
</dbReference>
<dbReference type="EMBL" id="AC005899">
    <property type="status" value="NOT_ANNOTATED_CDS"/>
    <property type="molecule type" value="Genomic_DNA"/>
</dbReference>
<dbReference type="EMBL" id="AC026620">
    <property type="status" value="NOT_ANNOTATED_CDS"/>
    <property type="molecule type" value="Genomic_DNA"/>
</dbReference>
<dbReference type="EMBL" id="BC100975">
    <property type="protein sequence ID" value="AAI00976.1"/>
    <property type="molecule type" value="mRNA"/>
</dbReference>
<dbReference type="EMBL" id="BC100977">
    <property type="protein sequence ID" value="AAI00978.1"/>
    <property type="molecule type" value="mRNA"/>
</dbReference>
<dbReference type="EMBL" id="BC100978">
    <property type="protein sequence ID" value="AAI00979.1"/>
    <property type="molecule type" value="mRNA"/>
</dbReference>
<dbReference type="CCDS" id="CCDS32613.1">
    <molecule id="P58872-1"/>
</dbReference>
<dbReference type="CCDS" id="CCDS82103.1">
    <molecule id="P58872-3"/>
</dbReference>
<dbReference type="CCDS" id="CCDS92287.1">
    <molecule id="P58872-2"/>
</dbReference>
<dbReference type="RefSeq" id="NP_001317110.1">
    <molecule id="P58872-3"/>
    <property type="nucleotide sequence ID" value="NM_001330181.2"/>
</dbReference>
<dbReference type="RefSeq" id="NP_001350765.1">
    <molecule id="P58872-2"/>
    <property type="nucleotide sequence ID" value="NM_001363836.1"/>
</dbReference>
<dbReference type="RefSeq" id="NP_612201.1">
    <molecule id="P58872-1"/>
    <property type="nucleotide sequence ID" value="NM_138328.3"/>
</dbReference>
<dbReference type="RefSeq" id="XP_016879768.1">
    <property type="nucleotide sequence ID" value="XM_017024279.1"/>
</dbReference>
<dbReference type="SMR" id="P58872"/>
<dbReference type="BioGRID" id="127820">
    <property type="interactions" value="4"/>
</dbReference>
<dbReference type="FunCoup" id="P58872">
    <property type="interactions" value="9"/>
</dbReference>
<dbReference type="STRING" id="9606.ENSP00000269051"/>
<dbReference type="MEROPS" id="S54.006"/>
<dbReference type="iPTMnet" id="P58872"/>
<dbReference type="PhosphoSitePlus" id="P58872"/>
<dbReference type="SwissPalm" id="P58872"/>
<dbReference type="BioMuta" id="RHBDL3"/>
<dbReference type="DMDM" id="21542300"/>
<dbReference type="MassIVE" id="P58872"/>
<dbReference type="PaxDb" id="9606-ENSP00000269051"/>
<dbReference type="PeptideAtlas" id="P58872"/>
<dbReference type="ProteomicsDB" id="57104">
    <molecule id="P58872-1"/>
</dbReference>
<dbReference type="ProteomicsDB" id="61980"/>
<dbReference type="Antibodypedia" id="71802">
    <property type="antibodies" value="7 antibodies from 7 providers"/>
</dbReference>
<dbReference type="DNASU" id="162494"/>
<dbReference type="Ensembl" id="ENST00000269051.9">
    <molecule id="P58872-1"/>
    <property type="protein sequence ID" value="ENSP00000269051.4"/>
    <property type="gene ID" value="ENSG00000141314.13"/>
</dbReference>
<dbReference type="Ensembl" id="ENST00000536287.2">
    <molecule id="P58872-2"/>
    <property type="protein sequence ID" value="ENSP00000466508.1"/>
    <property type="gene ID" value="ENSG00000141314.13"/>
</dbReference>
<dbReference type="Ensembl" id="ENST00000538145.5">
    <molecule id="P58872-3"/>
    <property type="protein sequence ID" value="ENSP00000442092.1"/>
    <property type="gene ID" value="ENSG00000141314.13"/>
</dbReference>
<dbReference type="GeneID" id="162494"/>
<dbReference type="KEGG" id="hsa:162494"/>
<dbReference type="MANE-Select" id="ENST00000269051.9">
    <property type="protein sequence ID" value="ENSP00000269051.4"/>
    <property type="RefSeq nucleotide sequence ID" value="NM_138328.3"/>
    <property type="RefSeq protein sequence ID" value="NP_612201.1"/>
</dbReference>
<dbReference type="UCSC" id="uc002hhe.1">
    <molecule id="P58872-1"/>
    <property type="organism name" value="human"/>
</dbReference>
<dbReference type="AGR" id="HGNC:16502"/>
<dbReference type="CTD" id="162494"/>
<dbReference type="DisGeNET" id="162494"/>
<dbReference type="GeneCards" id="RHBDL3"/>
<dbReference type="HGNC" id="HGNC:16502">
    <property type="gene designation" value="RHBDL3"/>
</dbReference>
<dbReference type="HPA" id="ENSG00000141314">
    <property type="expression patterns" value="Tissue enhanced (brain, heart muscle, retina)"/>
</dbReference>
<dbReference type="MIM" id="619017">
    <property type="type" value="gene"/>
</dbReference>
<dbReference type="neXtProt" id="NX_P58872"/>
<dbReference type="OpenTargets" id="ENSG00000141314"/>
<dbReference type="PharmGKB" id="PA34384"/>
<dbReference type="VEuPathDB" id="HostDB:ENSG00000141314"/>
<dbReference type="eggNOG" id="KOG0027">
    <property type="taxonomic scope" value="Eukaryota"/>
</dbReference>
<dbReference type="eggNOG" id="KOG2289">
    <property type="taxonomic scope" value="Eukaryota"/>
</dbReference>
<dbReference type="GeneTree" id="ENSGT00940000158838"/>
<dbReference type="HOGENOM" id="CLU_048023_2_1_1"/>
<dbReference type="InParanoid" id="P58872"/>
<dbReference type="OMA" id="MAPEDHW"/>
<dbReference type="OrthoDB" id="418595at2759"/>
<dbReference type="PAN-GO" id="P58872">
    <property type="GO annotations" value="1 GO annotation based on evolutionary models"/>
</dbReference>
<dbReference type="PhylomeDB" id="P58872"/>
<dbReference type="TreeFam" id="TF313540"/>
<dbReference type="PathwayCommons" id="P58872"/>
<dbReference type="BioGRID-ORCS" id="162494">
    <property type="hits" value="10 hits in 1138 CRISPR screens"/>
</dbReference>
<dbReference type="ChiTaRS" id="RHBDL3">
    <property type="organism name" value="human"/>
</dbReference>
<dbReference type="GenomeRNAi" id="162494"/>
<dbReference type="Pharos" id="P58872">
    <property type="development level" value="Tdark"/>
</dbReference>
<dbReference type="PRO" id="PR:P58872"/>
<dbReference type="Proteomes" id="UP000005640">
    <property type="component" value="Chromosome 17"/>
</dbReference>
<dbReference type="RNAct" id="P58872">
    <property type="molecule type" value="protein"/>
</dbReference>
<dbReference type="Bgee" id="ENSG00000141314">
    <property type="expression patterns" value="Expressed in right frontal lobe and 90 other cell types or tissues"/>
</dbReference>
<dbReference type="ExpressionAtlas" id="P58872">
    <property type="expression patterns" value="baseline and differential"/>
</dbReference>
<dbReference type="GO" id="GO:0016020">
    <property type="term" value="C:membrane"/>
    <property type="evidence" value="ECO:0007669"/>
    <property type="project" value="UniProtKB-SubCell"/>
</dbReference>
<dbReference type="GO" id="GO:0005509">
    <property type="term" value="F:calcium ion binding"/>
    <property type="evidence" value="ECO:0007669"/>
    <property type="project" value="InterPro"/>
</dbReference>
<dbReference type="GO" id="GO:0004252">
    <property type="term" value="F:serine-type endopeptidase activity"/>
    <property type="evidence" value="ECO:0000318"/>
    <property type="project" value="GO_Central"/>
</dbReference>
<dbReference type="GO" id="GO:0006508">
    <property type="term" value="P:proteolysis"/>
    <property type="evidence" value="ECO:0007669"/>
    <property type="project" value="UniProtKB-KW"/>
</dbReference>
<dbReference type="FunFam" id="1.10.238.10:FF:000343">
    <property type="entry name" value="RHBDL3 isoform 3"/>
    <property type="match status" value="1"/>
</dbReference>
<dbReference type="FunFam" id="1.20.1540.10:FF:000002">
    <property type="entry name" value="Rhomboid, veinlet-like 3 (Drosophila)"/>
    <property type="match status" value="1"/>
</dbReference>
<dbReference type="Gene3D" id="1.10.238.10">
    <property type="entry name" value="EF-hand"/>
    <property type="match status" value="1"/>
</dbReference>
<dbReference type="Gene3D" id="1.20.1540.10">
    <property type="entry name" value="Rhomboid-like"/>
    <property type="match status" value="1"/>
</dbReference>
<dbReference type="InterPro" id="IPR011992">
    <property type="entry name" value="EF-hand-dom_pair"/>
</dbReference>
<dbReference type="InterPro" id="IPR002048">
    <property type="entry name" value="EF_hand_dom"/>
</dbReference>
<dbReference type="InterPro" id="IPR022764">
    <property type="entry name" value="Peptidase_S54_rhomboid_dom"/>
</dbReference>
<dbReference type="InterPro" id="IPR017213">
    <property type="entry name" value="Peptidase_S54_rhomboid_met"/>
</dbReference>
<dbReference type="InterPro" id="IPR035952">
    <property type="entry name" value="Rhomboid-like_sf"/>
</dbReference>
<dbReference type="InterPro" id="IPR051739">
    <property type="entry name" value="Rhomboid_IM_Serine_Proteases"/>
</dbReference>
<dbReference type="PANTHER" id="PTHR45840">
    <property type="entry name" value="RHOMBOID-RELATED PROTEIN"/>
    <property type="match status" value="1"/>
</dbReference>
<dbReference type="PANTHER" id="PTHR45840:SF5">
    <property type="entry name" value="RHOMBOID-RELATED PROTEIN 3"/>
    <property type="match status" value="1"/>
</dbReference>
<dbReference type="Pfam" id="PF13499">
    <property type="entry name" value="EF-hand_7"/>
    <property type="match status" value="1"/>
</dbReference>
<dbReference type="Pfam" id="PF01694">
    <property type="entry name" value="Rhomboid"/>
    <property type="match status" value="1"/>
</dbReference>
<dbReference type="PIRSF" id="PIRSF037470">
    <property type="entry name" value="Rhomboid"/>
    <property type="match status" value="1"/>
</dbReference>
<dbReference type="SUPFAM" id="SSF47473">
    <property type="entry name" value="EF-hand"/>
    <property type="match status" value="1"/>
</dbReference>
<dbReference type="SUPFAM" id="SSF144091">
    <property type="entry name" value="Rhomboid-like"/>
    <property type="match status" value="1"/>
</dbReference>
<dbReference type="PROSITE" id="PS50222">
    <property type="entry name" value="EF_HAND_2"/>
    <property type="match status" value="2"/>
</dbReference>
<proteinExistence type="evidence at protein level"/>